<organism>
    <name type="scientific">Arabidopsis thaliana</name>
    <name type="common">Mouse-ear cress</name>
    <dbReference type="NCBI Taxonomy" id="3702"/>
    <lineage>
        <taxon>Eukaryota</taxon>
        <taxon>Viridiplantae</taxon>
        <taxon>Streptophyta</taxon>
        <taxon>Embryophyta</taxon>
        <taxon>Tracheophyta</taxon>
        <taxon>Spermatophyta</taxon>
        <taxon>Magnoliopsida</taxon>
        <taxon>eudicotyledons</taxon>
        <taxon>Gunneridae</taxon>
        <taxon>Pentapetalae</taxon>
        <taxon>rosids</taxon>
        <taxon>malvids</taxon>
        <taxon>Brassicales</taxon>
        <taxon>Brassicaceae</taxon>
        <taxon>Camelineae</taxon>
        <taxon>Arabidopsis</taxon>
    </lineage>
</organism>
<proteinExistence type="inferred from homology"/>
<accession>Q9STQ2</accession>
<name>SBT3I_ARATH</name>
<sequence length="779" mass="85197">MYFWVMFFTLMIKVKLYITNGDIFQNRPTVYVVYLGANRLKNAALASSHHLHLLSKVFTSKDDAEQSMLYSYNNGFLGFSAKLNSTQAASLAKLNQVITVFKSKSLKLHTTRSWDFLGLAVDNARRTPPPQLAYGSDIVVGIFDTGIWPESESFRETPEAKPIPSSWNGKCVGGEDFDPSVHCNRKLIGARFYLRGFEETYGTIDFTRDPEYRSPRDYLGHGTHTASTAVGSVVRNVSGFFGLGRGTARGGAPLARLAVFKTCWGKDLEGVCTEADILAAFDDAIHDGVHVISASFGYSPPLSPFFESSADIGAFHAAERGISVVFSTGNDGPDPGVVQNVAPWAVSVAASTVDRSFPTRIVIDGSFTLTGQSLISQEITGTLALATTYFNGGVCKWENWMKKLANETIILCFSTLGPVQFIEEAQAAAIRANALALIFAASPTRQLAEEVDMIPTVRVDILHGTRIRNYLARSPTVPMVKIGPSKTVIGETTAPSVAYFSSRGPSSLSPDILKPDITAPGIGILAAWPPRTPPTLLPGDHRSIEWNFQSGTSMSCPHVAGVMALLQSAHPDWSPSAIRSAIMTTAYTRDTSYDLILSGGSMKSTDPFDIGAGHINPLKAMDPGLVYNTRTDDYVLFMCNIGYTDQEIKSMVLHPEPSTTCLPSHSYRTNADFNYPSITIPSLRLTRTIKRTVSNVGPNKNTVYFVDIIRPVGVEVLIWPRILVFSKCQQEHSYYVTFKPTEIFSGRYVFGEIMWTNGLHRVRSPVVVFLSNAGFLASS</sequence>
<feature type="signal peptide" evidence="3">
    <location>
        <begin position="1"/>
        <end position="21"/>
    </location>
</feature>
<feature type="propeptide" id="PRO_0000435222" description="Activation peptide" evidence="1">
    <location>
        <begin position="22"/>
        <end position="109"/>
    </location>
</feature>
<feature type="chain" id="PRO_0000435223" description="Subtilisin-like protease SBT3.18">
    <location>
        <begin position="110"/>
        <end status="unknown"/>
    </location>
</feature>
<feature type="propeptide" id="PRO_0000435224" evidence="1">
    <location>
        <begin status="unknown"/>
        <end position="779"/>
    </location>
</feature>
<feature type="domain" description="Inhibitor I9" evidence="3">
    <location>
        <begin position="30"/>
        <end position="109"/>
    </location>
</feature>
<feature type="domain" description="Peptidase S8" evidence="5">
    <location>
        <begin position="113"/>
        <end position="621"/>
    </location>
</feature>
<feature type="active site" description="Charge relay system" evidence="5">
    <location>
        <position position="144"/>
    </location>
</feature>
<feature type="active site" description="Charge relay system" evidence="5">
    <location>
        <position position="221"/>
    </location>
</feature>
<feature type="active site" description="Charge relay system" evidence="5">
    <location>
        <position position="553"/>
    </location>
</feature>
<feature type="glycosylation site" description="N-linked (GlcNAc...) asparagine" evidence="4">
    <location>
        <position position="84"/>
    </location>
</feature>
<feature type="glycosylation site" description="N-linked (GlcNAc...) asparagine" evidence="4">
    <location>
        <position position="236"/>
    </location>
</feature>
<feature type="glycosylation site" description="N-linked (GlcNAc...) asparagine" evidence="4">
    <location>
        <position position="406"/>
    </location>
</feature>
<keyword id="KW-0068">Autocatalytic cleavage</keyword>
<keyword id="KW-0325">Glycoprotein</keyword>
<keyword id="KW-0378">Hydrolase</keyword>
<keyword id="KW-0645">Protease</keyword>
<keyword id="KW-1185">Reference proteome</keyword>
<keyword id="KW-0964">Secreted</keyword>
<keyword id="KW-0720">Serine protease</keyword>
<keyword id="KW-0732">Signal</keyword>
<keyword id="KW-0865">Zymogen</keyword>
<gene>
    <name evidence="7" type="primary">SBT3.18</name>
    <name type="synonym">UNE17</name>
    <name evidence="9" type="ordered locus">At4g26330</name>
    <name evidence="10" type="ORF">T25K17.140</name>
</gene>
<evidence type="ECO:0000250" key="1">
    <source>
        <dbReference type="UniProtKB" id="Q39547"/>
    </source>
</evidence>
<evidence type="ECO:0000250" key="2">
    <source>
        <dbReference type="UniProtKB" id="Q84WS0"/>
    </source>
</evidence>
<evidence type="ECO:0000255" key="3"/>
<evidence type="ECO:0000255" key="4">
    <source>
        <dbReference type="PROSITE-ProRule" id="PRU00498"/>
    </source>
</evidence>
<evidence type="ECO:0000255" key="5">
    <source>
        <dbReference type="PROSITE-ProRule" id="PRU01240"/>
    </source>
</evidence>
<evidence type="ECO:0000255" key="6">
    <source>
        <dbReference type="PROSITE-ProRule" id="PRU10082"/>
    </source>
</evidence>
<evidence type="ECO:0000303" key="7">
    <source>
    </source>
</evidence>
<evidence type="ECO:0000305" key="8"/>
<evidence type="ECO:0000312" key="9">
    <source>
        <dbReference type="Araport" id="AT4G26330"/>
    </source>
</evidence>
<evidence type="ECO:0000312" key="10">
    <source>
        <dbReference type="EMBL" id="CAB38962.1"/>
    </source>
</evidence>
<dbReference type="EC" id="3.4.21.-" evidence="6"/>
<dbReference type="EMBL" id="AL049171">
    <property type="protein sequence ID" value="CAB38962.1"/>
    <property type="status" value="ALT_SEQ"/>
    <property type="molecule type" value="Genomic_DNA"/>
</dbReference>
<dbReference type="EMBL" id="AL161565">
    <property type="protein sequence ID" value="CAB79488.1"/>
    <property type="status" value="ALT_SEQ"/>
    <property type="molecule type" value="Genomic_DNA"/>
</dbReference>
<dbReference type="EMBL" id="CP002687">
    <property type="protein sequence ID" value="AEE85186.1"/>
    <property type="status" value="ALT_SEQ"/>
    <property type="molecule type" value="Genomic_DNA"/>
</dbReference>
<dbReference type="PIR" id="T06017">
    <property type="entry name" value="T06017"/>
</dbReference>
<dbReference type="RefSeq" id="NP_567744.1">
    <property type="nucleotide sequence ID" value="NM_118766.2"/>
</dbReference>
<dbReference type="SMR" id="Q9STQ2"/>
<dbReference type="STRING" id="3702.Q9STQ2"/>
<dbReference type="MEROPS" id="S08.A40"/>
<dbReference type="GlyCosmos" id="Q9STQ2">
    <property type="glycosylation" value="3 sites, No reported glycans"/>
</dbReference>
<dbReference type="GlyGen" id="Q9STQ2">
    <property type="glycosylation" value="3 sites"/>
</dbReference>
<dbReference type="PaxDb" id="3702-AT4G26330.1"/>
<dbReference type="PeptideAtlas" id="Q9STQ2"/>
<dbReference type="GeneID" id="828739"/>
<dbReference type="KEGG" id="ath:AT4G26330"/>
<dbReference type="Araport" id="AT4G26330"/>
<dbReference type="TAIR" id="AT4G26330">
    <property type="gene designation" value="UNE17"/>
</dbReference>
<dbReference type="eggNOG" id="ENOG502QVIY">
    <property type="taxonomic scope" value="Eukaryota"/>
</dbReference>
<dbReference type="HOGENOM" id="CLU_000625_4_6_1"/>
<dbReference type="InParanoid" id="Q9STQ2"/>
<dbReference type="PRO" id="PR:Q9STQ2"/>
<dbReference type="Proteomes" id="UP000006548">
    <property type="component" value="Chromosome 4"/>
</dbReference>
<dbReference type="ExpressionAtlas" id="Q9STQ2">
    <property type="expression patterns" value="baseline and differential"/>
</dbReference>
<dbReference type="GO" id="GO:0005576">
    <property type="term" value="C:extracellular region"/>
    <property type="evidence" value="ECO:0007669"/>
    <property type="project" value="UniProtKB-SubCell"/>
</dbReference>
<dbReference type="GO" id="GO:0004252">
    <property type="term" value="F:serine-type endopeptidase activity"/>
    <property type="evidence" value="ECO:0007669"/>
    <property type="project" value="InterPro"/>
</dbReference>
<dbReference type="GO" id="GO:0009567">
    <property type="term" value="P:double fertilization forming a zygote and endosperm"/>
    <property type="evidence" value="ECO:0000315"/>
    <property type="project" value="TAIR"/>
</dbReference>
<dbReference type="GO" id="GO:0006508">
    <property type="term" value="P:proteolysis"/>
    <property type="evidence" value="ECO:0007669"/>
    <property type="project" value="UniProtKB-KW"/>
</dbReference>
<dbReference type="CDD" id="cd02120">
    <property type="entry name" value="PA_subtilisin_like"/>
    <property type="match status" value="1"/>
</dbReference>
<dbReference type="CDD" id="cd04852">
    <property type="entry name" value="Peptidases_S8_3"/>
    <property type="match status" value="1"/>
</dbReference>
<dbReference type="FunFam" id="2.60.40.2310:FF:000001">
    <property type="entry name" value="Subtilisin-like protease SBT1.5"/>
    <property type="match status" value="1"/>
</dbReference>
<dbReference type="FunFam" id="3.40.50.200:FF:000006">
    <property type="entry name" value="Subtilisin-like protease SBT1.5"/>
    <property type="match status" value="1"/>
</dbReference>
<dbReference type="FunFam" id="3.30.70.80:FF:000002">
    <property type="entry name" value="Subtilisin-like protease SBT5.3"/>
    <property type="match status" value="1"/>
</dbReference>
<dbReference type="Gene3D" id="2.60.40.2310">
    <property type="match status" value="1"/>
</dbReference>
<dbReference type="Gene3D" id="3.50.30.30">
    <property type="match status" value="1"/>
</dbReference>
<dbReference type="Gene3D" id="3.30.70.80">
    <property type="entry name" value="Peptidase S8 propeptide/proteinase inhibitor I9"/>
    <property type="match status" value="1"/>
</dbReference>
<dbReference type="Gene3D" id="3.40.50.200">
    <property type="entry name" value="Peptidase S8/S53 domain"/>
    <property type="match status" value="1"/>
</dbReference>
<dbReference type="InterPro" id="IPR000209">
    <property type="entry name" value="Peptidase_S8/S53_dom"/>
</dbReference>
<dbReference type="InterPro" id="IPR036852">
    <property type="entry name" value="Peptidase_S8/S53_dom_sf"/>
</dbReference>
<dbReference type="InterPro" id="IPR023828">
    <property type="entry name" value="Peptidase_S8_Ser-AS"/>
</dbReference>
<dbReference type="InterPro" id="IPR015500">
    <property type="entry name" value="Peptidase_S8_subtilisin-rel"/>
</dbReference>
<dbReference type="InterPro" id="IPR034197">
    <property type="entry name" value="Peptidases_S8_3"/>
</dbReference>
<dbReference type="InterPro" id="IPR010259">
    <property type="entry name" value="S8pro/Inhibitor_I9"/>
</dbReference>
<dbReference type="InterPro" id="IPR037045">
    <property type="entry name" value="S8pro/Inhibitor_I9_sf"/>
</dbReference>
<dbReference type="InterPro" id="IPR045051">
    <property type="entry name" value="SBT"/>
</dbReference>
<dbReference type="InterPro" id="IPR041469">
    <property type="entry name" value="Subtilisin-like_FN3"/>
</dbReference>
<dbReference type="PANTHER" id="PTHR10795">
    <property type="entry name" value="PROPROTEIN CONVERTASE SUBTILISIN/KEXIN"/>
    <property type="match status" value="1"/>
</dbReference>
<dbReference type="Pfam" id="PF17766">
    <property type="entry name" value="fn3_6"/>
    <property type="match status" value="1"/>
</dbReference>
<dbReference type="Pfam" id="PF05922">
    <property type="entry name" value="Inhibitor_I9"/>
    <property type="match status" value="1"/>
</dbReference>
<dbReference type="Pfam" id="PF00082">
    <property type="entry name" value="Peptidase_S8"/>
    <property type="match status" value="1"/>
</dbReference>
<dbReference type="PRINTS" id="PR00723">
    <property type="entry name" value="SUBTILISIN"/>
</dbReference>
<dbReference type="SUPFAM" id="SSF52743">
    <property type="entry name" value="Subtilisin-like"/>
    <property type="match status" value="1"/>
</dbReference>
<dbReference type="PROSITE" id="PS51892">
    <property type="entry name" value="SUBTILASE"/>
    <property type="match status" value="1"/>
</dbReference>
<dbReference type="PROSITE" id="PS00138">
    <property type="entry name" value="SUBTILASE_SER"/>
    <property type="match status" value="1"/>
</dbReference>
<comment type="subcellular location">
    <subcellularLocation>
        <location evidence="2">Secreted</location>
    </subcellularLocation>
</comment>
<comment type="similarity">
    <text evidence="8">Belongs to the peptidase S8 family.</text>
</comment>
<comment type="sequence caution" evidence="8">
    <conflict type="erroneous gene model prediction">
        <sequence resource="EMBL-CDS" id="AEE85186"/>
    </conflict>
</comment>
<comment type="sequence caution" evidence="8">
    <conflict type="erroneous gene model prediction">
        <sequence resource="EMBL-CDS" id="CAB38962"/>
    </conflict>
</comment>
<comment type="sequence caution" evidence="8">
    <conflict type="erroneous gene model prediction">
        <sequence resource="EMBL-CDS" id="CAB79488"/>
    </conflict>
</comment>
<reference key="1">
    <citation type="journal article" date="1999" name="Nature">
        <title>Sequence and analysis of chromosome 4 of the plant Arabidopsis thaliana.</title>
        <authorList>
            <person name="Mayer K.F.X."/>
            <person name="Schueller C."/>
            <person name="Wambutt R."/>
            <person name="Murphy G."/>
            <person name="Volckaert G."/>
            <person name="Pohl T."/>
            <person name="Duesterhoeft A."/>
            <person name="Stiekema W."/>
            <person name="Entian K.-D."/>
            <person name="Terryn N."/>
            <person name="Harris B."/>
            <person name="Ansorge W."/>
            <person name="Brandt P."/>
            <person name="Grivell L.A."/>
            <person name="Rieger M."/>
            <person name="Weichselgartner M."/>
            <person name="de Simone V."/>
            <person name="Obermaier B."/>
            <person name="Mache R."/>
            <person name="Mueller M."/>
            <person name="Kreis M."/>
            <person name="Delseny M."/>
            <person name="Puigdomenech P."/>
            <person name="Watson M."/>
            <person name="Schmidtheini T."/>
            <person name="Reichert B."/>
            <person name="Portetelle D."/>
            <person name="Perez-Alonso M."/>
            <person name="Boutry M."/>
            <person name="Bancroft I."/>
            <person name="Vos P."/>
            <person name="Hoheisel J."/>
            <person name="Zimmermann W."/>
            <person name="Wedler H."/>
            <person name="Ridley P."/>
            <person name="Langham S.-A."/>
            <person name="McCullagh B."/>
            <person name="Bilham L."/>
            <person name="Robben J."/>
            <person name="van der Schueren J."/>
            <person name="Grymonprez B."/>
            <person name="Chuang Y.-J."/>
            <person name="Vandenbussche F."/>
            <person name="Braeken M."/>
            <person name="Weltjens I."/>
            <person name="Voet M."/>
            <person name="Bastiaens I."/>
            <person name="Aert R."/>
            <person name="Defoor E."/>
            <person name="Weitzenegger T."/>
            <person name="Bothe G."/>
            <person name="Ramsperger U."/>
            <person name="Hilbert H."/>
            <person name="Braun M."/>
            <person name="Holzer E."/>
            <person name="Brandt A."/>
            <person name="Peters S."/>
            <person name="van Staveren M."/>
            <person name="Dirkse W."/>
            <person name="Mooijman P."/>
            <person name="Klein Lankhorst R."/>
            <person name="Rose M."/>
            <person name="Hauf J."/>
            <person name="Koetter P."/>
            <person name="Berneiser S."/>
            <person name="Hempel S."/>
            <person name="Feldpausch M."/>
            <person name="Lamberth S."/>
            <person name="Van den Daele H."/>
            <person name="De Keyser A."/>
            <person name="Buysshaert C."/>
            <person name="Gielen J."/>
            <person name="Villarroel R."/>
            <person name="De Clercq R."/>
            <person name="van Montagu M."/>
            <person name="Rogers J."/>
            <person name="Cronin A."/>
            <person name="Quail M.A."/>
            <person name="Bray-Allen S."/>
            <person name="Clark L."/>
            <person name="Doggett J."/>
            <person name="Hall S."/>
            <person name="Kay M."/>
            <person name="Lennard N."/>
            <person name="McLay K."/>
            <person name="Mayes R."/>
            <person name="Pettett A."/>
            <person name="Rajandream M.A."/>
            <person name="Lyne M."/>
            <person name="Benes V."/>
            <person name="Rechmann S."/>
            <person name="Borkova D."/>
            <person name="Bloecker H."/>
            <person name="Scharfe M."/>
            <person name="Grimm M."/>
            <person name="Loehnert T.-H."/>
            <person name="Dose S."/>
            <person name="de Haan M."/>
            <person name="Maarse A.C."/>
            <person name="Schaefer M."/>
            <person name="Mueller-Auer S."/>
            <person name="Gabel C."/>
            <person name="Fuchs M."/>
            <person name="Fartmann B."/>
            <person name="Granderath K."/>
            <person name="Dauner D."/>
            <person name="Herzl A."/>
            <person name="Neumann S."/>
            <person name="Argiriou A."/>
            <person name="Vitale D."/>
            <person name="Liguori R."/>
            <person name="Piravandi E."/>
            <person name="Massenet O."/>
            <person name="Quigley F."/>
            <person name="Clabauld G."/>
            <person name="Muendlein A."/>
            <person name="Felber R."/>
            <person name="Schnabl S."/>
            <person name="Hiller R."/>
            <person name="Schmidt W."/>
            <person name="Lecharny A."/>
            <person name="Aubourg S."/>
            <person name="Chefdor F."/>
            <person name="Cooke R."/>
            <person name="Berger C."/>
            <person name="Monfort A."/>
            <person name="Casacuberta E."/>
            <person name="Gibbons T."/>
            <person name="Weber N."/>
            <person name="Vandenbol M."/>
            <person name="Bargues M."/>
            <person name="Terol J."/>
            <person name="Torres A."/>
            <person name="Perez-Perez A."/>
            <person name="Purnelle B."/>
            <person name="Bent E."/>
            <person name="Johnson S."/>
            <person name="Tacon D."/>
            <person name="Jesse T."/>
            <person name="Heijnen L."/>
            <person name="Schwarz S."/>
            <person name="Scholler P."/>
            <person name="Heber S."/>
            <person name="Francs P."/>
            <person name="Bielke C."/>
            <person name="Frishman D."/>
            <person name="Haase D."/>
            <person name="Lemcke K."/>
            <person name="Mewes H.-W."/>
            <person name="Stocker S."/>
            <person name="Zaccaria P."/>
            <person name="Bevan M."/>
            <person name="Wilson R.K."/>
            <person name="de la Bastide M."/>
            <person name="Habermann K."/>
            <person name="Parnell L."/>
            <person name="Dedhia N."/>
            <person name="Gnoj L."/>
            <person name="Schutz K."/>
            <person name="Huang E."/>
            <person name="Spiegel L."/>
            <person name="Sekhon M."/>
            <person name="Murray J."/>
            <person name="Sheet P."/>
            <person name="Cordes M."/>
            <person name="Abu-Threideh J."/>
            <person name="Stoneking T."/>
            <person name="Kalicki J."/>
            <person name="Graves T."/>
            <person name="Harmon G."/>
            <person name="Edwards J."/>
            <person name="Latreille P."/>
            <person name="Courtney L."/>
            <person name="Cloud J."/>
            <person name="Abbott A."/>
            <person name="Scott K."/>
            <person name="Johnson D."/>
            <person name="Minx P."/>
            <person name="Bentley D."/>
            <person name="Fulton B."/>
            <person name="Miller N."/>
            <person name="Greco T."/>
            <person name="Kemp K."/>
            <person name="Kramer J."/>
            <person name="Fulton L."/>
            <person name="Mardis E."/>
            <person name="Dante M."/>
            <person name="Pepin K."/>
            <person name="Hillier L.W."/>
            <person name="Nelson J."/>
            <person name="Spieth J."/>
            <person name="Ryan E."/>
            <person name="Andrews S."/>
            <person name="Geisel C."/>
            <person name="Layman D."/>
            <person name="Du H."/>
            <person name="Ali J."/>
            <person name="Berghoff A."/>
            <person name="Jones K."/>
            <person name="Drone K."/>
            <person name="Cotton M."/>
            <person name="Joshu C."/>
            <person name="Antonoiu B."/>
            <person name="Zidanic M."/>
            <person name="Strong C."/>
            <person name="Sun H."/>
            <person name="Lamar B."/>
            <person name="Yordan C."/>
            <person name="Ma P."/>
            <person name="Zhong J."/>
            <person name="Preston R."/>
            <person name="Vil D."/>
            <person name="Shekher M."/>
            <person name="Matero A."/>
            <person name="Shah R."/>
            <person name="Swaby I.K."/>
            <person name="O'Shaughnessy A."/>
            <person name="Rodriguez M."/>
            <person name="Hoffman J."/>
            <person name="Till S."/>
            <person name="Granat S."/>
            <person name="Shohdy N."/>
            <person name="Hasegawa A."/>
            <person name="Hameed A."/>
            <person name="Lodhi M."/>
            <person name="Johnson A."/>
            <person name="Chen E."/>
            <person name="Marra M.A."/>
            <person name="Martienssen R."/>
            <person name="McCombie W.R."/>
        </authorList>
    </citation>
    <scope>NUCLEOTIDE SEQUENCE [LARGE SCALE GENOMIC DNA]</scope>
    <source>
        <strain>cv. Columbia</strain>
    </source>
</reference>
<reference key="2">
    <citation type="journal article" date="2017" name="Plant J.">
        <title>Araport11: a complete reannotation of the Arabidopsis thaliana reference genome.</title>
        <authorList>
            <person name="Cheng C.Y."/>
            <person name="Krishnakumar V."/>
            <person name="Chan A.P."/>
            <person name="Thibaud-Nissen F."/>
            <person name="Schobel S."/>
            <person name="Town C.D."/>
        </authorList>
    </citation>
    <scope>GENOME REANNOTATION</scope>
    <source>
        <strain>cv. Columbia</strain>
    </source>
</reference>
<reference key="3">
    <citation type="journal article" date="2005" name="PLoS Comput. Biol.">
        <title>Inferring hypotheses on functional relationships of genes: Analysis of the Arabidopsis thaliana subtilase gene family.</title>
        <authorList>
            <person name="Rautengarten C."/>
            <person name="Steinhauser D."/>
            <person name="Bussis D."/>
            <person name="Stintzi A."/>
            <person name="Schaller A."/>
            <person name="Kopka J."/>
            <person name="Altmann T."/>
        </authorList>
    </citation>
    <scope>GENE FAMILY</scope>
    <scope>NOMENCLATURE</scope>
</reference>
<protein>
    <recommendedName>
        <fullName evidence="7">Subtilisin-like protease SBT3.18</fullName>
        <ecNumber evidence="6">3.4.21.-</ecNumber>
    </recommendedName>
    <alternativeName>
        <fullName evidence="7">Subtilase subfamily 3 member 18</fullName>
        <shortName evidence="7">AtSBT3.18</shortName>
    </alternativeName>
</protein>